<comment type="function">
    <text evidence="1">Catalyzes the transfer of a methyl group to L-homocysteine resulting in methionine formation. The physiological methyl donor is unknown.</text>
</comment>
<comment type="cofactor">
    <cofactor evidence="1">
        <name>Zn(2+)</name>
        <dbReference type="ChEBI" id="CHEBI:29105"/>
    </cofactor>
    <text evidence="1">Binds 1 zinc ion per subunit.</text>
</comment>
<comment type="pathway">
    <text evidence="1">Amino-acid biosynthesis; L-methionine biosynthesis via de novo pathway.</text>
</comment>
<comment type="similarity">
    <text evidence="1 2">Belongs to the archaeal MetE family.</text>
</comment>
<protein>
    <recommendedName>
        <fullName evidence="1">Methionine synthase</fullName>
        <ecNumber evidence="1">2.1.1.-</ecNumber>
    </recommendedName>
    <alternativeName>
        <fullName evidence="1">Homocysteine methyltransferase</fullName>
    </alternativeName>
</protein>
<feature type="chain" id="PRO_1000204858" description="Methionine synthase">
    <location>
        <begin position="1"/>
        <end position="332"/>
    </location>
</feature>
<feature type="binding site" evidence="1">
    <location>
        <position position="211"/>
    </location>
    <ligand>
        <name>Zn(2+)</name>
        <dbReference type="ChEBI" id="CHEBI:29105"/>
        <note>catalytic</note>
    </ligand>
</feature>
<feature type="binding site" evidence="1">
    <location>
        <position position="213"/>
    </location>
    <ligand>
        <name>Zn(2+)</name>
        <dbReference type="ChEBI" id="CHEBI:29105"/>
        <note>catalytic</note>
    </ligand>
</feature>
<feature type="binding site" evidence="1">
    <location>
        <position position="296"/>
    </location>
    <ligand>
        <name>Zn(2+)</name>
        <dbReference type="ChEBI" id="CHEBI:29105"/>
        <note>catalytic</note>
    </ligand>
</feature>
<proteinExistence type="inferred from homology"/>
<keyword id="KW-0028">Amino-acid biosynthesis</keyword>
<keyword id="KW-0479">Metal-binding</keyword>
<keyword id="KW-0486">Methionine biosynthesis</keyword>
<keyword id="KW-0489">Methyltransferase</keyword>
<keyword id="KW-0808">Transferase</keyword>
<keyword id="KW-0862">Zinc</keyword>
<dbReference type="EC" id="2.1.1.-" evidence="1"/>
<dbReference type="EMBL" id="CP001403">
    <property type="protein sequence ID" value="ACP46069.1"/>
    <property type="molecule type" value="Genomic_DNA"/>
</dbReference>
<dbReference type="RefSeq" id="WP_012716364.1">
    <property type="nucleotide sequence ID" value="NC_012622.1"/>
</dbReference>
<dbReference type="SMR" id="C3N775"/>
<dbReference type="GeneID" id="7807212"/>
<dbReference type="KEGG" id="siy:YG5714_1812"/>
<dbReference type="HOGENOM" id="CLU_040013_3_2_2"/>
<dbReference type="UniPathway" id="UPA00051"/>
<dbReference type="Proteomes" id="UP000002308">
    <property type="component" value="Chromosome"/>
</dbReference>
<dbReference type="GO" id="GO:0003871">
    <property type="term" value="F:5-methyltetrahydropteroyltriglutamate-homocysteine S-methyltransferase activity"/>
    <property type="evidence" value="ECO:0007669"/>
    <property type="project" value="InterPro"/>
</dbReference>
<dbReference type="GO" id="GO:0008270">
    <property type="term" value="F:zinc ion binding"/>
    <property type="evidence" value="ECO:0007669"/>
    <property type="project" value="InterPro"/>
</dbReference>
<dbReference type="GO" id="GO:0009086">
    <property type="term" value="P:methionine biosynthetic process"/>
    <property type="evidence" value="ECO:0007669"/>
    <property type="project" value="UniProtKB-UniRule"/>
</dbReference>
<dbReference type="GO" id="GO:0032259">
    <property type="term" value="P:methylation"/>
    <property type="evidence" value="ECO:0007669"/>
    <property type="project" value="UniProtKB-KW"/>
</dbReference>
<dbReference type="CDD" id="cd03311">
    <property type="entry name" value="CIMS_C_terminal_like"/>
    <property type="match status" value="1"/>
</dbReference>
<dbReference type="Gene3D" id="3.20.20.210">
    <property type="match status" value="1"/>
</dbReference>
<dbReference type="HAMAP" id="MF_00288">
    <property type="entry name" value="MetE"/>
    <property type="match status" value="1"/>
</dbReference>
<dbReference type="InterPro" id="IPR002629">
    <property type="entry name" value="Met_Synth_C/arc"/>
</dbReference>
<dbReference type="InterPro" id="IPR022921">
    <property type="entry name" value="MetE_arc"/>
</dbReference>
<dbReference type="InterPro" id="IPR038071">
    <property type="entry name" value="UROD/MetE-like_sf"/>
</dbReference>
<dbReference type="NCBIfam" id="NF003317">
    <property type="entry name" value="PRK04326.1"/>
    <property type="match status" value="1"/>
</dbReference>
<dbReference type="PANTHER" id="PTHR30519">
    <property type="entry name" value="5-METHYLTETRAHYDROPTEROYLTRIGLUTAMATE--HOMOCYSTEINE METHYLTRANSFERASE"/>
    <property type="match status" value="1"/>
</dbReference>
<dbReference type="Pfam" id="PF01717">
    <property type="entry name" value="Meth_synt_2"/>
    <property type="match status" value="1"/>
</dbReference>
<dbReference type="SUPFAM" id="SSF51726">
    <property type="entry name" value="UROD/MetE-like"/>
    <property type="match status" value="1"/>
</dbReference>
<organism>
    <name type="scientific">Saccharolobus islandicus (strain Y.G.57.14 / Yellowstone #1)</name>
    <name type="common">Sulfolobus islandicus</name>
    <dbReference type="NCBI Taxonomy" id="439386"/>
    <lineage>
        <taxon>Archaea</taxon>
        <taxon>Thermoproteota</taxon>
        <taxon>Thermoprotei</taxon>
        <taxon>Sulfolobales</taxon>
        <taxon>Sulfolobaceae</taxon>
        <taxon>Saccharolobus</taxon>
    </lineage>
</organism>
<gene>
    <name evidence="1" type="primary">metE</name>
    <name type="ordered locus">YG5714_1812</name>
</gene>
<evidence type="ECO:0000255" key="1">
    <source>
        <dbReference type="HAMAP-Rule" id="MF_00288"/>
    </source>
</evidence>
<evidence type="ECO:0000305" key="2"/>
<sequence>MSKLPLLPTTVIGSYPRPKWLRESIRLHKAGKISDEDLQEAFNDAVIAVLKDHYNAGVDVPTDGEVRRDEMVEFFAERIKGFKFYGPVRVWGTAYYRKPSVVSKIEYKKPMLVDEFTFAKSVSYTDNLKITITGPYTIVEWSYNEYYKNKKDLVFDLAKAINQEIKNLVEAGAKIIQIDEPALHTRREDVSWGVEAVNEAVKGVNAKLVMHICYGEYSFVAPYLNELKVDQINFAFKIYNYKPLELLKRYGFDKELGAGVIDVHNRRIETSEEVANDIRKILEYFTPEKLWINPDCGLKLLSRKIAYQKLVSMVEGTKVVREELKRKGYSVD</sequence>
<reference key="1">
    <citation type="journal article" date="2009" name="Proc. Natl. Acad. Sci. U.S.A.">
        <title>Biogeography of the Sulfolobus islandicus pan-genome.</title>
        <authorList>
            <person name="Reno M.L."/>
            <person name="Held N.L."/>
            <person name="Fields C.J."/>
            <person name="Burke P.V."/>
            <person name="Whitaker R.J."/>
        </authorList>
    </citation>
    <scope>NUCLEOTIDE SEQUENCE [LARGE SCALE GENOMIC DNA]</scope>
    <source>
        <strain>Y.G.57.14 / Yellowstone #1</strain>
    </source>
</reference>
<name>METE_SACI7</name>
<accession>C3N775</accession>